<feature type="chain" id="PRO_1000000899" description="Adenylosuccinate synthetase">
    <location>
        <begin position="1"/>
        <end position="429"/>
    </location>
</feature>
<feature type="active site" description="Proton acceptor" evidence="1">
    <location>
        <position position="14"/>
    </location>
</feature>
<feature type="active site" description="Proton donor" evidence="1">
    <location>
        <position position="42"/>
    </location>
</feature>
<feature type="binding site" evidence="1">
    <location>
        <begin position="13"/>
        <end position="19"/>
    </location>
    <ligand>
        <name>GTP</name>
        <dbReference type="ChEBI" id="CHEBI:37565"/>
    </ligand>
</feature>
<feature type="binding site" description="in other chain" evidence="1">
    <location>
        <begin position="14"/>
        <end position="17"/>
    </location>
    <ligand>
        <name>IMP</name>
        <dbReference type="ChEBI" id="CHEBI:58053"/>
        <note>ligand shared between dimeric partners</note>
    </ligand>
</feature>
<feature type="binding site" evidence="1">
    <location>
        <position position="14"/>
    </location>
    <ligand>
        <name>Mg(2+)</name>
        <dbReference type="ChEBI" id="CHEBI:18420"/>
    </ligand>
</feature>
<feature type="binding site" description="in other chain" evidence="1">
    <location>
        <begin position="39"/>
        <end position="42"/>
    </location>
    <ligand>
        <name>IMP</name>
        <dbReference type="ChEBI" id="CHEBI:58053"/>
        <note>ligand shared between dimeric partners</note>
    </ligand>
</feature>
<feature type="binding site" evidence="1">
    <location>
        <begin position="41"/>
        <end position="43"/>
    </location>
    <ligand>
        <name>GTP</name>
        <dbReference type="ChEBI" id="CHEBI:37565"/>
    </ligand>
</feature>
<feature type="binding site" evidence="1">
    <location>
        <position position="41"/>
    </location>
    <ligand>
        <name>Mg(2+)</name>
        <dbReference type="ChEBI" id="CHEBI:18420"/>
    </ligand>
</feature>
<feature type="binding site" description="in other chain" evidence="1">
    <location>
        <position position="130"/>
    </location>
    <ligand>
        <name>IMP</name>
        <dbReference type="ChEBI" id="CHEBI:58053"/>
        <note>ligand shared between dimeric partners</note>
    </ligand>
</feature>
<feature type="binding site" evidence="1">
    <location>
        <position position="144"/>
    </location>
    <ligand>
        <name>IMP</name>
        <dbReference type="ChEBI" id="CHEBI:58053"/>
        <note>ligand shared between dimeric partners</note>
    </ligand>
</feature>
<feature type="binding site" description="in other chain" evidence="1">
    <location>
        <position position="224"/>
    </location>
    <ligand>
        <name>IMP</name>
        <dbReference type="ChEBI" id="CHEBI:58053"/>
        <note>ligand shared between dimeric partners</note>
    </ligand>
</feature>
<feature type="binding site" description="in other chain" evidence="1">
    <location>
        <position position="239"/>
    </location>
    <ligand>
        <name>IMP</name>
        <dbReference type="ChEBI" id="CHEBI:58053"/>
        <note>ligand shared between dimeric partners</note>
    </ligand>
</feature>
<feature type="binding site" evidence="1">
    <location>
        <begin position="299"/>
        <end position="305"/>
    </location>
    <ligand>
        <name>substrate</name>
    </ligand>
</feature>
<feature type="binding site" description="in other chain" evidence="1">
    <location>
        <position position="303"/>
    </location>
    <ligand>
        <name>IMP</name>
        <dbReference type="ChEBI" id="CHEBI:58053"/>
        <note>ligand shared between dimeric partners</note>
    </ligand>
</feature>
<feature type="binding site" evidence="1">
    <location>
        <position position="305"/>
    </location>
    <ligand>
        <name>GTP</name>
        <dbReference type="ChEBI" id="CHEBI:37565"/>
    </ligand>
</feature>
<feature type="binding site" evidence="1">
    <location>
        <begin position="331"/>
        <end position="333"/>
    </location>
    <ligand>
        <name>GTP</name>
        <dbReference type="ChEBI" id="CHEBI:37565"/>
    </ligand>
</feature>
<feature type="binding site" evidence="1">
    <location>
        <begin position="412"/>
        <end position="414"/>
    </location>
    <ligand>
        <name>GTP</name>
        <dbReference type="ChEBI" id="CHEBI:37565"/>
    </ligand>
</feature>
<name>PURA_PSYCK</name>
<reference key="1">
    <citation type="submission" date="2006-03" db="EMBL/GenBank/DDBJ databases">
        <title>Complete sequence of chromosome of Psychrobacter cryohalolentis K5.</title>
        <authorList>
            <consortium name="US DOE Joint Genome Institute"/>
            <person name="Copeland A."/>
            <person name="Lucas S."/>
            <person name="Lapidus A."/>
            <person name="Barry K."/>
            <person name="Detter J.C."/>
            <person name="Glavina T."/>
            <person name="Hammon N."/>
            <person name="Israni S."/>
            <person name="Dalin E."/>
            <person name="Tice H."/>
            <person name="Pitluck S."/>
            <person name="Brettin T."/>
            <person name="Bruce D."/>
            <person name="Han C."/>
            <person name="Tapia R."/>
            <person name="Sims D.R."/>
            <person name="Gilna P."/>
            <person name="Schmutz J."/>
            <person name="Larimer F."/>
            <person name="Land M."/>
            <person name="Hauser L."/>
            <person name="Kyrpides N."/>
            <person name="Kim E."/>
            <person name="Richardson P."/>
        </authorList>
    </citation>
    <scope>NUCLEOTIDE SEQUENCE [LARGE SCALE GENOMIC DNA]</scope>
    <source>
        <strain>ATCC BAA-1226 / DSM 17306 / VKM B-2378 / K5</strain>
    </source>
</reference>
<keyword id="KW-0963">Cytoplasm</keyword>
<keyword id="KW-0342">GTP-binding</keyword>
<keyword id="KW-0436">Ligase</keyword>
<keyword id="KW-0460">Magnesium</keyword>
<keyword id="KW-0479">Metal-binding</keyword>
<keyword id="KW-0547">Nucleotide-binding</keyword>
<keyword id="KW-0658">Purine biosynthesis</keyword>
<proteinExistence type="inferred from homology"/>
<protein>
    <recommendedName>
        <fullName evidence="1">Adenylosuccinate synthetase</fullName>
        <shortName evidence="1">AMPSase</shortName>
        <shortName evidence="1">AdSS</shortName>
        <ecNumber evidence="1">6.3.4.4</ecNumber>
    </recommendedName>
    <alternativeName>
        <fullName evidence="1">IMP--aspartate ligase</fullName>
    </alternativeName>
</protein>
<evidence type="ECO:0000255" key="1">
    <source>
        <dbReference type="HAMAP-Rule" id="MF_00011"/>
    </source>
</evidence>
<gene>
    <name evidence="1" type="primary">purA</name>
    <name type="ordered locus">Pcryo_0645</name>
</gene>
<accession>Q1QD25</accession>
<sequence>MGKNVVVLGSQWGDEGKGKIVDLLTEKASAVARFQGGHNAGHTLVVDGKTTVLHLIPSGILREGVTCFIGNGVVLAPDALLKEMKGLEENGVPVRERLRISPNCPLIMPYHVALDQAREAKRGSGKIGTTGRGIGPAYEDKVARRAIKLADLFRDDLEEKLRNLIEYHNFQLTQYYKVEAIDFDETLKLCKEWKEEIRGMVTDVTEDLNQLRLAGKNLMFEGAQGTLLDIDHGTYPFVTSSSVTAGGVSTGTGIGPLYLDYVLGITKAYTTRVGSGPFPTELFDDVGAHLAKVGHEFGATTGRARRCGWFDAEALRRAVVLNSMSGICLTKLDVLDGLEELLIGVGYNLPETECAGAHDAEFYEAVTPKYETLQGWSESTVGITNYDELPENAKIYIKRIEALIGCPVDIISTGPDREETIVLRDPYDA</sequence>
<dbReference type="EC" id="6.3.4.4" evidence="1"/>
<dbReference type="EMBL" id="CP000323">
    <property type="protein sequence ID" value="ABE74428.1"/>
    <property type="molecule type" value="Genomic_DNA"/>
</dbReference>
<dbReference type="RefSeq" id="WP_011512996.1">
    <property type="nucleotide sequence ID" value="NC_007969.1"/>
</dbReference>
<dbReference type="SMR" id="Q1QD25"/>
<dbReference type="STRING" id="335284.Pcryo_0645"/>
<dbReference type="KEGG" id="pcr:Pcryo_0645"/>
<dbReference type="eggNOG" id="COG0104">
    <property type="taxonomic scope" value="Bacteria"/>
</dbReference>
<dbReference type="HOGENOM" id="CLU_029848_0_0_6"/>
<dbReference type="UniPathway" id="UPA00075">
    <property type="reaction ID" value="UER00335"/>
</dbReference>
<dbReference type="Proteomes" id="UP000002425">
    <property type="component" value="Chromosome"/>
</dbReference>
<dbReference type="GO" id="GO:0005737">
    <property type="term" value="C:cytoplasm"/>
    <property type="evidence" value="ECO:0007669"/>
    <property type="project" value="UniProtKB-SubCell"/>
</dbReference>
<dbReference type="GO" id="GO:0004019">
    <property type="term" value="F:adenylosuccinate synthase activity"/>
    <property type="evidence" value="ECO:0007669"/>
    <property type="project" value="UniProtKB-UniRule"/>
</dbReference>
<dbReference type="GO" id="GO:0005525">
    <property type="term" value="F:GTP binding"/>
    <property type="evidence" value="ECO:0007669"/>
    <property type="project" value="UniProtKB-UniRule"/>
</dbReference>
<dbReference type="GO" id="GO:0000287">
    <property type="term" value="F:magnesium ion binding"/>
    <property type="evidence" value="ECO:0007669"/>
    <property type="project" value="UniProtKB-UniRule"/>
</dbReference>
<dbReference type="GO" id="GO:0044208">
    <property type="term" value="P:'de novo' AMP biosynthetic process"/>
    <property type="evidence" value="ECO:0007669"/>
    <property type="project" value="UniProtKB-UniRule"/>
</dbReference>
<dbReference type="GO" id="GO:0046040">
    <property type="term" value="P:IMP metabolic process"/>
    <property type="evidence" value="ECO:0007669"/>
    <property type="project" value="TreeGrafter"/>
</dbReference>
<dbReference type="CDD" id="cd03108">
    <property type="entry name" value="AdSS"/>
    <property type="match status" value="1"/>
</dbReference>
<dbReference type="FunFam" id="1.10.300.10:FF:000001">
    <property type="entry name" value="Adenylosuccinate synthetase"/>
    <property type="match status" value="1"/>
</dbReference>
<dbReference type="FunFam" id="3.90.170.10:FF:000001">
    <property type="entry name" value="Adenylosuccinate synthetase"/>
    <property type="match status" value="1"/>
</dbReference>
<dbReference type="Gene3D" id="3.40.440.10">
    <property type="entry name" value="Adenylosuccinate Synthetase, subunit A, domain 1"/>
    <property type="match status" value="1"/>
</dbReference>
<dbReference type="Gene3D" id="1.10.300.10">
    <property type="entry name" value="Adenylosuccinate Synthetase, subunit A, domain 2"/>
    <property type="match status" value="1"/>
</dbReference>
<dbReference type="Gene3D" id="3.90.170.10">
    <property type="entry name" value="Adenylosuccinate Synthetase, subunit A, domain 3"/>
    <property type="match status" value="1"/>
</dbReference>
<dbReference type="HAMAP" id="MF_00011">
    <property type="entry name" value="Adenylosucc_synth"/>
    <property type="match status" value="1"/>
</dbReference>
<dbReference type="InterPro" id="IPR018220">
    <property type="entry name" value="Adenylosuccin_syn_GTP-bd"/>
</dbReference>
<dbReference type="InterPro" id="IPR033128">
    <property type="entry name" value="Adenylosuccin_syn_Lys_AS"/>
</dbReference>
<dbReference type="InterPro" id="IPR042109">
    <property type="entry name" value="Adenylosuccinate_synth_dom1"/>
</dbReference>
<dbReference type="InterPro" id="IPR042110">
    <property type="entry name" value="Adenylosuccinate_synth_dom2"/>
</dbReference>
<dbReference type="InterPro" id="IPR042111">
    <property type="entry name" value="Adenylosuccinate_synth_dom3"/>
</dbReference>
<dbReference type="InterPro" id="IPR001114">
    <property type="entry name" value="Adenylosuccinate_synthetase"/>
</dbReference>
<dbReference type="InterPro" id="IPR027417">
    <property type="entry name" value="P-loop_NTPase"/>
</dbReference>
<dbReference type="NCBIfam" id="NF002223">
    <property type="entry name" value="PRK01117.1"/>
    <property type="match status" value="1"/>
</dbReference>
<dbReference type="NCBIfam" id="TIGR00184">
    <property type="entry name" value="purA"/>
    <property type="match status" value="1"/>
</dbReference>
<dbReference type="PANTHER" id="PTHR11846">
    <property type="entry name" value="ADENYLOSUCCINATE SYNTHETASE"/>
    <property type="match status" value="1"/>
</dbReference>
<dbReference type="PANTHER" id="PTHR11846:SF0">
    <property type="entry name" value="ADENYLOSUCCINATE SYNTHETASE"/>
    <property type="match status" value="1"/>
</dbReference>
<dbReference type="Pfam" id="PF00709">
    <property type="entry name" value="Adenylsucc_synt"/>
    <property type="match status" value="1"/>
</dbReference>
<dbReference type="SMART" id="SM00788">
    <property type="entry name" value="Adenylsucc_synt"/>
    <property type="match status" value="1"/>
</dbReference>
<dbReference type="SUPFAM" id="SSF52540">
    <property type="entry name" value="P-loop containing nucleoside triphosphate hydrolases"/>
    <property type="match status" value="1"/>
</dbReference>
<dbReference type="PROSITE" id="PS01266">
    <property type="entry name" value="ADENYLOSUCCIN_SYN_1"/>
    <property type="match status" value="1"/>
</dbReference>
<dbReference type="PROSITE" id="PS00513">
    <property type="entry name" value="ADENYLOSUCCIN_SYN_2"/>
    <property type="match status" value="1"/>
</dbReference>
<organism>
    <name type="scientific">Psychrobacter cryohalolentis (strain ATCC BAA-1226 / DSM 17306 / VKM B-2378 / K5)</name>
    <dbReference type="NCBI Taxonomy" id="335284"/>
    <lineage>
        <taxon>Bacteria</taxon>
        <taxon>Pseudomonadati</taxon>
        <taxon>Pseudomonadota</taxon>
        <taxon>Gammaproteobacteria</taxon>
        <taxon>Moraxellales</taxon>
        <taxon>Moraxellaceae</taxon>
        <taxon>Psychrobacter</taxon>
    </lineage>
</organism>
<comment type="function">
    <text evidence="1">Plays an important role in the de novo pathway of purine nucleotide biosynthesis. Catalyzes the first committed step in the biosynthesis of AMP from IMP.</text>
</comment>
<comment type="catalytic activity">
    <reaction evidence="1">
        <text>IMP + L-aspartate + GTP = N(6)-(1,2-dicarboxyethyl)-AMP + GDP + phosphate + 2 H(+)</text>
        <dbReference type="Rhea" id="RHEA:15753"/>
        <dbReference type="ChEBI" id="CHEBI:15378"/>
        <dbReference type="ChEBI" id="CHEBI:29991"/>
        <dbReference type="ChEBI" id="CHEBI:37565"/>
        <dbReference type="ChEBI" id="CHEBI:43474"/>
        <dbReference type="ChEBI" id="CHEBI:57567"/>
        <dbReference type="ChEBI" id="CHEBI:58053"/>
        <dbReference type="ChEBI" id="CHEBI:58189"/>
        <dbReference type="EC" id="6.3.4.4"/>
    </reaction>
</comment>
<comment type="cofactor">
    <cofactor evidence="1">
        <name>Mg(2+)</name>
        <dbReference type="ChEBI" id="CHEBI:18420"/>
    </cofactor>
    <text evidence="1">Binds 1 Mg(2+) ion per subunit.</text>
</comment>
<comment type="pathway">
    <text evidence="1">Purine metabolism; AMP biosynthesis via de novo pathway; AMP from IMP: step 1/2.</text>
</comment>
<comment type="subunit">
    <text evidence="1">Homodimer.</text>
</comment>
<comment type="subcellular location">
    <subcellularLocation>
        <location evidence="1">Cytoplasm</location>
    </subcellularLocation>
</comment>
<comment type="similarity">
    <text evidence="1">Belongs to the adenylosuccinate synthetase family.</text>
</comment>